<protein>
    <recommendedName>
        <fullName evidence="3">Methylesterase 10</fullName>
        <shortName evidence="3">AtMES10</shortName>
        <ecNumber evidence="2">3.1.1.-</ecNumber>
    </recommendedName>
</protein>
<evidence type="ECO:0000250" key="1">
    <source>
        <dbReference type="UniProtKB" id="Q6RYA0"/>
    </source>
</evidence>
<evidence type="ECO:0000269" key="2">
    <source>
    </source>
</evidence>
<evidence type="ECO:0000303" key="3">
    <source>
    </source>
</evidence>
<evidence type="ECO:0000305" key="4"/>
<evidence type="ECO:0000312" key="5">
    <source>
        <dbReference type="Araport" id="AT3G50440"/>
    </source>
</evidence>
<evidence type="ECO:0000312" key="6">
    <source>
        <dbReference type="EMBL" id="CAB62473.1"/>
    </source>
</evidence>
<comment type="function">
    <text evidence="2">Methylesterase shown to have methyl jasmonate (MeJA) esterase activity in vitro.</text>
</comment>
<comment type="catalytic activity">
    <reaction evidence="2">
        <text>methyl (-)-jasmonate + H2O = jasmonate + methanol + H(+)</text>
        <dbReference type="Rhea" id="RHEA:55372"/>
        <dbReference type="ChEBI" id="CHEBI:15377"/>
        <dbReference type="ChEBI" id="CHEBI:15378"/>
        <dbReference type="ChEBI" id="CHEBI:15929"/>
        <dbReference type="ChEBI" id="CHEBI:17790"/>
        <dbReference type="ChEBI" id="CHEBI:58431"/>
    </reaction>
    <physiologicalReaction direction="left-to-right" evidence="2">
        <dbReference type="Rhea" id="RHEA:55373"/>
    </physiologicalReaction>
</comment>
<comment type="pathway">
    <text evidence="2">Plant hormone biosynthesis.</text>
</comment>
<comment type="pathway">
    <text evidence="2">Lipid metabolism; oxylipin biosynthesis.</text>
</comment>
<comment type="similarity">
    <text evidence="4">Belongs to the AB hydrolase superfamily. Methylesterase family.</text>
</comment>
<comment type="sequence caution" evidence="4">
    <conflict type="erroneous initiation">
        <sequence resource="EMBL-CDS" id="CAB62473"/>
    </conflict>
    <text>Truncated N-terminus.</text>
</comment>
<feature type="chain" id="PRO_0000418184" description="Methylesterase 10">
    <location>
        <begin position="1"/>
        <end position="275"/>
    </location>
</feature>
<feature type="active site" description="Acyl-ester intermediate" evidence="1">
    <location>
        <position position="96"/>
    </location>
</feature>
<feature type="active site" description="Charge relay system" evidence="1">
    <location>
        <position position="225"/>
    </location>
</feature>
<feature type="active site" description="Charge relay system" evidence="1">
    <location>
        <position position="253"/>
    </location>
</feature>
<organism>
    <name type="scientific">Arabidopsis thaliana</name>
    <name type="common">Mouse-ear cress</name>
    <dbReference type="NCBI Taxonomy" id="3702"/>
    <lineage>
        <taxon>Eukaryota</taxon>
        <taxon>Viridiplantae</taxon>
        <taxon>Streptophyta</taxon>
        <taxon>Embryophyta</taxon>
        <taxon>Tracheophyta</taxon>
        <taxon>Spermatophyta</taxon>
        <taxon>Magnoliopsida</taxon>
        <taxon>eudicotyledons</taxon>
        <taxon>Gunneridae</taxon>
        <taxon>Pentapetalae</taxon>
        <taxon>rosids</taxon>
        <taxon>malvids</taxon>
        <taxon>Brassicales</taxon>
        <taxon>Brassicaceae</taxon>
        <taxon>Camelineae</taxon>
        <taxon>Arabidopsis</taxon>
    </lineage>
</organism>
<proteinExistence type="evidence at protein level"/>
<sequence length="275" mass="31358">MTYQKQYQMQTHHMQQQQLHHFVFVHGSCHGAWCWFKLAAKLKLDGHRVTAIDLGGSGVDTRQLHEVRLVSAYLEPLMSFMESLPENEKVVLVGHSYGGIGTSLAMERFPTKVSVGIFLSAYMPHHDSPPAVLIQEYFTRLPEGFAMDCEFTFEEGLEHPPSSVLFGTSFLKEKAYSNCQLEDLELAMALMKPSWLYTKEMGGEDLITKERYGSGKRVFIVCEGDNVVPEEIQKWMISNYEPHEVKRIEEAGHMAMLTKPHELSQLLQEIAAKYN</sequence>
<keyword id="KW-0378">Hydrolase</keyword>
<keyword id="KW-1185">Reference proteome</keyword>
<gene>
    <name evidence="3" type="primary">MES10</name>
    <name evidence="5" type="ordered locus">At3g50440</name>
    <name evidence="6" type="ORF">T20E23_40</name>
</gene>
<dbReference type="EC" id="3.1.1.-" evidence="2"/>
<dbReference type="EMBL" id="AL133363">
    <property type="protein sequence ID" value="CAB62473.1"/>
    <property type="status" value="ALT_INIT"/>
    <property type="molecule type" value="Genomic_DNA"/>
</dbReference>
<dbReference type="EMBL" id="CP002686">
    <property type="protein sequence ID" value="AEE78667.2"/>
    <property type="molecule type" value="Genomic_DNA"/>
</dbReference>
<dbReference type="EMBL" id="AY074858">
    <property type="protein sequence ID" value="AAL75909.1"/>
    <property type="molecule type" value="mRNA"/>
</dbReference>
<dbReference type="EMBL" id="AY142031">
    <property type="protein sequence ID" value="AAM98295.1"/>
    <property type="molecule type" value="mRNA"/>
</dbReference>
<dbReference type="PIR" id="T46075">
    <property type="entry name" value="T46075"/>
</dbReference>
<dbReference type="RefSeq" id="NP_566932.4">
    <property type="nucleotide sequence ID" value="NM_114904.4"/>
</dbReference>
<dbReference type="SMR" id="Q8S9K8"/>
<dbReference type="BioGRID" id="9526">
    <property type="interactions" value="2"/>
</dbReference>
<dbReference type="FunCoup" id="Q8S9K8">
    <property type="interactions" value="16"/>
</dbReference>
<dbReference type="IntAct" id="Q8S9K8">
    <property type="interactions" value="1"/>
</dbReference>
<dbReference type="STRING" id="3702.Q8S9K8"/>
<dbReference type="ESTHER" id="arath-MES10">
    <property type="family name" value="Hydroxynitrile_lyase"/>
</dbReference>
<dbReference type="MEROPS" id="S33.A80"/>
<dbReference type="PaxDb" id="3702-AT3G50440.1"/>
<dbReference type="ProteomicsDB" id="232233"/>
<dbReference type="EnsemblPlants" id="AT3G50440.1">
    <property type="protein sequence ID" value="AT3G50440.1"/>
    <property type="gene ID" value="AT3G50440"/>
</dbReference>
<dbReference type="GeneID" id="824208"/>
<dbReference type="Gramene" id="AT3G50440.1">
    <property type="protein sequence ID" value="AT3G50440.1"/>
    <property type="gene ID" value="AT3G50440"/>
</dbReference>
<dbReference type="KEGG" id="ath:AT3G50440"/>
<dbReference type="Araport" id="AT3G50440"/>
<dbReference type="TAIR" id="AT3G50440">
    <property type="gene designation" value="MES10"/>
</dbReference>
<dbReference type="eggNOG" id="ENOG502QQCC">
    <property type="taxonomic scope" value="Eukaryota"/>
</dbReference>
<dbReference type="HOGENOM" id="CLU_046066_0_1_1"/>
<dbReference type="InParanoid" id="Q8S9K8"/>
<dbReference type="OMA" id="HMAMLTK"/>
<dbReference type="PhylomeDB" id="Q8S9K8"/>
<dbReference type="BioCyc" id="ARA:AT3G50440-MONOMER"/>
<dbReference type="UniPathway" id="UPA00382"/>
<dbReference type="PRO" id="PR:Q8S9K8"/>
<dbReference type="Proteomes" id="UP000006548">
    <property type="component" value="Chromosome 3"/>
</dbReference>
<dbReference type="ExpressionAtlas" id="Q8S9K8">
    <property type="expression patterns" value="baseline and differential"/>
</dbReference>
<dbReference type="GO" id="GO:0005829">
    <property type="term" value="C:cytosol"/>
    <property type="evidence" value="ECO:0007005"/>
    <property type="project" value="TAIR"/>
</dbReference>
<dbReference type="GO" id="GO:0016788">
    <property type="term" value="F:hydrolase activity, acting on ester bonds"/>
    <property type="evidence" value="ECO:0000314"/>
    <property type="project" value="TAIR"/>
</dbReference>
<dbReference type="GO" id="GO:0080032">
    <property type="term" value="F:methyl jasmonate esterase activity"/>
    <property type="evidence" value="ECO:0000314"/>
    <property type="project" value="TAIR"/>
</dbReference>
<dbReference type="GO" id="GO:0071456">
    <property type="term" value="P:cellular response to hypoxia"/>
    <property type="evidence" value="ECO:0007007"/>
    <property type="project" value="TAIR"/>
</dbReference>
<dbReference type="GO" id="GO:0031408">
    <property type="term" value="P:oxylipin biosynthetic process"/>
    <property type="evidence" value="ECO:0007669"/>
    <property type="project" value="UniProtKB-UniPathway"/>
</dbReference>
<dbReference type="FunFam" id="3.40.50.1820:FF:000051">
    <property type="entry name" value="(S)-hydroxynitrile lyase"/>
    <property type="match status" value="1"/>
</dbReference>
<dbReference type="Gene3D" id="3.40.50.1820">
    <property type="entry name" value="alpha/beta hydrolase"/>
    <property type="match status" value="1"/>
</dbReference>
<dbReference type="InterPro" id="IPR000073">
    <property type="entry name" value="AB_hydrolase_1"/>
</dbReference>
<dbReference type="InterPro" id="IPR029058">
    <property type="entry name" value="AB_hydrolase_fold"/>
</dbReference>
<dbReference type="InterPro" id="IPR045889">
    <property type="entry name" value="MES/HNL"/>
</dbReference>
<dbReference type="PANTHER" id="PTHR10992:SF943">
    <property type="entry name" value="METHYLESTERASE 10"/>
    <property type="match status" value="1"/>
</dbReference>
<dbReference type="PANTHER" id="PTHR10992">
    <property type="entry name" value="METHYLESTERASE FAMILY MEMBER"/>
    <property type="match status" value="1"/>
</dbReference>
<dbReference type="Pfam" id="PF12697">
    <property type="entry name" value="Abhydrolase_6"/>
    <property type="match status" value="1"/>
</dbReference>
<dbReference type="SUPFAM" id="SSF53474">
    <property type="entry name" value="alpha/beta-Hydrolases"/>
    <property type="match status" value="1"/>
</dbReference>
<accession>Q8S9K8</accession>
<accession>F4J0M5</accession>
<accession>Q9SCT0</accession>
<name>MES10_ARATH</name>
<reference key="1">
    <citation type="journal article" date="2000" name="Nature">
        <title>Sequence and analysis of chromosome 3 of the plant Arabidopsis thaliana.</title>
        <authorList>
            <person name="Salanoubat M."/>
            <person name="Lemcke K."/>
            <person name="Rieger M."/>
            <person name="Ansorge W."/>
            <person name="Unseld M."/>
            <person name="Fartmann B."/>
            <person name="Valle G."/>
            <person name="Bloecker H."/>
            <person name="Perez-Alonso M."/>
            <person name="Obermaier B."/>
            <person name="Delseny M."/>
            <person name="Boutry M."/>
            <person name="Grivell L.A."/>
            <person name="Mache R."/>
            <person name="Puigdomenech P."/>
            <person name="De Simone V."/>
            <person name="Choisne N."/>
            <person name="Artiguenave F."/>
            <person name="Robert C."/>
            <person name="Brottier P."/>
            <person name="Wincker P."/>
            <person name="Cattolico L."/>
            <person name="Weissenbach J."/>
            <person name="Saurin W."/>
            <person name="Quetier F."/>
            <person name="Schaefer M."/>
            <person name="Mueller-Auer S."/>
            <person name="Gabel C."/>
            <person name="Fuchs M."/>
            <person name="Benes V."/>
            <person name="Wurmbach E."/>
            <person name="Drzonek H."/>
            <person name="Erfle H."/>
            <person name="Jordan N."/>
            <person name="Bangert S."/>
            <person name="Wiedelmann R."/>
            <person name="Kranz H."/>
            <person name="Voss H."/>
            <person name="Holland R."/>
            <person name="Brandt P."/>
            <person name="Nyakatura G."/>
            <person name="Vezzi A."/>
            <person name="D'Angelo M."/>
            <person name="Pallavicini A."/>
            <person name="Toppo S."/>
            <person name="Simionati B."/>
            <person name="Conrad A."/>
            <person name="Hornischer K."/>
            <person name="Kauer G."/>
            <person name="Loehnert T.-H."/>
            <person name="Nordsiek G."/>
            <person name="Reichelt J."/>
            <person name="Scharfe M."/>
            <person name="Schoen O."/>
            <person name="Bargues M."/>
            <person name="Terol J."/>
            <person name="Climent J."/>
            <person name="Navarro P."/>
            <person name="Collado C."/>
            <person name="Perez-Perez A."/>
            <person name="Ottenwaelder B."/>
            <person name="Duchemin D."/>
            <person name="Cooke R."/>
            <person name="Laudie M."/>
            <person name="Berger-Llauro C."/>
            <person name="Purnelle B."/>
            <person name="Masuy D."/>
            <person name="de Haan M."/>
            <person name="Maarse A.C."/>
            <person name="Alcaraz J.-P."/>
            <person name="Cottet A."/>
            <person name="Casacuberta E."/>
            <person name="Monfort A."/>
            <person name="Argiriou A."/>
            <person name="Flores M."/>
            <person name="Liguori R."/>
            <person name="Vitale D."/>
            <person name="Mannhaupt G."/>
            <person name="Haase D."/>
            <person name="Schoof H."/>
            <person name="Rudd S."/>
            <person name="Zaccaria P."/>
            <person name="Mewes H.-W."/>
            <person name="Mayer K.F.X."/>
            <person name="Kaul S."/>
            <person name="Town C.D."/>
            <person name="Koo H.L."/>
            <person name="Tallon L.J."/>
            <person name="Jenkins J."/>
            <person name="Rooney T."/>
            <person name="Rizzo M."/>
            <person name="Walts A."/>
            <person name="Utterback T."/>
            <person name="Fujii C.Y."/>
            <person name="Shea T.P."/>
            <person name="Creasy T.H."/>
            <person name="Haas B."/>
            <person name="Maiti R."/>
            <person name="Wu D."/>
            <person name="Peterson J."/>
            <person name="Van Aken S."/>
            <person name="Pai G."/>
            <person name="Militscher J."/>
            <person name="Sellers P."/>
            <person name="Gill J.E."/>
            <person name="Feldblyum T.V."/>
            <person name="Preuss D."/>
            <person name="Lin X."/>
            <person name="Nierman W.C."/>
            <person name="Salzberg S.L."/>
            <person name="White O."/>
            <person name="Venter J.C."/>
            <person name="Fraser C.M."/>
            <person name="Kaneko T."/>
            <person name="Nakamura Y."/>
            <person name="Sato S."/>
            <person name="Kato T."/>
            <person name="Asamizu E."/>
            <person name="Sasamoto S."/>
            <person name="Kimura T."/>
            <person name="Idesawa K."/>
            <person name="Kawashima K."/>
            <person name="Kishida Y."/>
            <person name="Kiyokawa C."/>
            <person name="Kohara M."/>
            <person name="Matsumoto M."/>
            <person name="Matsuno A."/>
            <person name="Muraki A."/>
            <person name="Nakayama S."/>
            <person name="Nakazaki N."/>
            <person name="Shinpo S."/>
            <person name="Takeuchi C."/>
            <person name="Wada T."/>
            <person name="Watanabe A."/>
            <person name="Yamada M."/>
            <person name="Yasuda M."/>
            <person name="Tabata S."/>
        </authorList>
    </citation>
    <scope>NUCLEOTIDE SEQUENCE [LARGE SCALE GENOMIC DNA]</scope>
    <source>
        <strain>cv. Columbia</strain>
    </source>
</reference>
<reference key="2">
    <citation type="journal article" date="2017" name="Plant J.">
        <title>Araport11: a complete reannotation of the Arabidopsis thaliana reference genome.</title>
        <authorList>
            <person name="Cheng C.Y."/>
            <person name="Krishnakumar V."/>
            <person name="Chan A.P."/>
            <person name="Thibaud-Nissen F."/>
            <person name="Schobel S."/>
            <person name="Town C.D."/>
        </authorList>
    </citation>
    <scope>GENOME REANNOTATION</scope>
    <source>
        <strain>cv. Columbia</strain>
    </source>
</reference>
<reference key="3">
    <citation type="journal article" date="2003" name="Science">
        <title>Empirical analysis of transcriptional activity in the Arabidopsis genome.</title>
        <authorList>
            <person name="Yamada K."/>
            <person name="Lim J."/>
            <person name="Dale J.M."/>
            <person name="Chen H."/>
            <person name="Shinn P."/>
            <person name="Palm C.J."/>
            <person name="Southwick A.M."/>
            <person name="Wu H.C."/>
            <person name="Kim C.J."/>
            <person name="Nguyen M."/>
            <person name="Pham P.K."/>
            <person name="Cheuk R.F."/>
            <person name="Karlin-Newmann G."/>
            <person name="Liu S.X."/>
            <person name="Lam B."/>
            <person name="Sakano H."/>
            <person name="Wu T."/>
            <person name="Yu G."/>
            <person name="Miranda M."/>
            <person name="Quach H.L."/>
            <person name="Tripp M."/>
            <person name="Chang C.H."/>
            <person name="Lee J.M."/>
            <person name="Toriumi M.J."/>
            <person name="Chan M.M."/>
            <person name="Tang C.C."/>
            <person name="Onodera C.S."/>
            <person name="Deng J.M."/>
            <person name="Akiyama K."/>
            <person name="Ansari Y."/>
            <person name="Arakawa T."/>
            <person name="Banh J."/>
            <person name="Banno F."/>
            <person name="Bowser L."/>
            <person name="Brooks S.Y."/>
            <person name="Carninci P."/>
            <person name="Chao Q."/>
            <person name="Choy N."/>
            <person name="Enju A."/>
            <person name="Goldsmith A.D."/>
            <person name="Gurjal M."/>
            <person name="Hansen N.F."/>
            <person name="Hayashizaki Y."/>
            <person name="Johnson-Hopson C."/>
            <person name="Hsuan V.W."/>
            <person name="Iida K."/>
            <person name="Karnes M."/>
            <person name="Khan S."/>
            <person name="Koesema E."/>
            <person name="Ishida J."/>
            <person name="Jiang P.X."/>
            <person name="Jones T."/>
            <person name="Kawai J."/>
            <person name="Kamiya A."/>
            <person name="Meyers C."/>
            <person name="Nakajima M."/>
            <person name="Narusaka M."/>
            <person name="Seki M."/>
            <person name="Sakurai T."/>
            <person name="Satou M."/>
            <person name="Tamse R."/>
            <person name="Vaysberg M."/>
            <person name="Wallender E.K."/>
            <person name="Wong C."/>
            <person name="Yamamura Y."/>
            <person name="Yuan S."/>
            <person name="Shinozaki K."/>
            <person name="Davis R.W."/>
            <person name="Theologis A."/>
            <person name="Ecker J.R."/>
        </authorList>
    </citation>
    <scope>NUCLEOTIDE SEQUENCE [LARGE SCALE MRNA]</scope>
    <source>
        <strain>cv. Columbia</strain>
    </source>
</reference>
<reference key="4">
    <citation type="journal article" date="2008" name="Plant Physiol.">
        <title>Inactive methyl indole-3-acetic acid ester can be hydrolyzed and activated by several esterases belonging to the AtMES esterase family of Arabidopsis.</title>
        <authorList>
            <person name="Yang Y."/>
            <person name="Xu R."/>
            <person name="Ma C.J."/>
            <person name="Vlot A.C."/>
            <person name="Klessig D.F."/>
            <person name="Pichersky E."/>
        </authorList>
    </citation>
    <scope>GENE FAMILY</scope>
    <scope>FUNCTION</scope>
    <scope>CATALYTIC ACTIVITY</scope>
    <scope>PATHWAY</scope>
</reference>